<reference key="1">
    <citation type="journal article" date="2001" name="Mol. Microbiol.">
        <title>Phosphatidylcholine levels in Bradyrhizobium japonicum membranes are critical for an efficient symbiosis with the soybean host plant.</title>
        <authorList>
            <person name="Minder A.C."/>
            <person name="de Rudder K.E.E."/>
            <person name="Narberhaus F."/>
            <person name="Fischer H.-M."/>
            <person name="Hennecke H."/>
            <person name="Geiger O."/>
        </authorList>
    </citation>
    <scope>NUCLEOTIDE SEQUENCE [GENOMIC DNA]</scope>
    <source>
        <strain>USDA 110spc4</strain>
    </source>
</reference>
<reference key="2">
    <citation type="journal article" date="2002" name="DNA Res.">
        <title>Complete genomic sequence of nitrogen-fixing symbiotic bacterium Bradyrhizobium japonicum USDA110.</title>
        <authorList>
            <person name="Kaneko T."/>
            <person name="Nakamura Y."/>
            <person name="Sato S."/>
            <person name="Minamisawa K."/>
            <person name="Uchiumi T."/>
            <person name="Sasamoto S."/>
            <person name="Watanabe A."/>
            <person name="Idesawa K."/>
            <person name="Iriguchi M."/>
            <person name="Kawashima K."/>
            <person name="Kohara M."/>
            <person name="Matsumoto M."/>
            <person name="Shimpo S."/>
            <person name="Tsuruoka H."/>
            <person name="Wada T."/>
            <person name="Yamada M."/>
            <person name="Tabata S."/>
        </authorList>
    </citation>
    <scope>NUCLEOTIDE SEQUENCE [LARGE SCALE GENOMIC DNA]</scope>
    <source>
        <strain>JCM 10833 / BCRC 13528 / IAM 13628 / NBRC 14792 / USDA 110</strain>
    </source>
</reference>
<name>PYRF_BRADU</name>
<comment type="function">
    <text evidence="1">Catalyzes the decarboxylation of orotidine 5'-monophosphate (OMP) to uridine 5'-monophosphate (UMP).</text>
</comment>
<comment type="catalytic activity">
    <reaction evidence="1">
        <text>orotidine 5'-phosphate + H(+) = UMP + CO2</text>
        <dbReference type="Rhea" id="RHEA:11596"/>
        <dbReference type="ChEBI" id="CHEBI:15378"/>
        <dbReference type="ChEBI" id="CHEBI:16526"/>
        <dbReference type="ChEBI" id="CHEBI:57538"/>
        <dbReference type="ChEBI" id="CHEBI:57865"/>
        <dbReference type="EC" id="4.1.1.23"/>
    </reaction>
</comment>
<comment type="pathway">
    <text evidence="1">Pyrimidine metabolism; UMP biosynthesis via de novo pathway; UMP from orotate: step 2/2.</text>
</comment>
<comment type="subunit">
    <text evidence="1">Homodimer.</text>
</comment>
<comment type="similarity">
    <text evidence="1">Belongs to the OMP decarboxylase family. Type 1 subfamily.</text>
</comment>
<organism>
    <name type="scientific">Bradyrhizobium diazoefficiens (strain JCM 10833 / BCRC 13528 / IAM 13628 / NBRC 14792 / USDA 110)</name>
    <dbReference type="NCBI Taxonomy" id="224911"/>
    <lineage>
        <taxon>Bacteria</taxon>
        <taxon>Pseudomonadati</taxon>
        <taxon>Pseudomonadota</taxon>
        <taxon>Alphaproteobacteria</taxon>
        <taxon>Hyphomicrobiales</taxon>
        <taxon>Nitrobacteraceae</taxon>
        <taxon>Bradyrhizobium</taxon>
    </lineage>
</organism>
<keyword id="KW-0210">Decarboxylase</keyword>
<keyword id="KW-0456">Lyase</keyword>
<keyword id="KW-0665">Pyrimidine biosynthesis</keyword>
<keyword id="KW-1185">Reference proteome</keyword>
<evidence type="ECO:0000255" key="1">
    <source>
        <dbReference type="HAMAP-Rule" id="MF_01200"/>
    </source>
</evidence>
<dbReference type="EC" id="4.1.1.23" evidence="1"/>
<dbReference type="EMBL" id="Y09633">
    <property type="protein sequence ID" value="CAB91880.1"/>
    <property type="molecule type" value="Genomic_DNA"/>
</dbReference>
<dbReference type="EMBL" id="BA000040">
    <property type="protein sequence ID" value="BAC45948.1"/>
    <property type="molecule type" value="Genomic_DNA"/>
</dbReference>
<dbReference type="RefSeq" id="NP_767323.1">
    <property type="nucleotide sequence ID" value="NC_004463.1"/>
</dbReference>
<dbReference type="RefSeq" id="WP_011083509.1">
    <property type="nucleotide sequence ID" value="NC_004463.1"/>
</dbReference>
<dbReference type="SMR" id="Q9LCT0"/>
<dbReference type="FunCoup" id="Q9LCT0">
    <property type="interactions" value="458"/>
</dbReference>
<dbReference type="STRING" id="224911.AAV28_00250"/>
<dbReference type="EnsemblBacteria" id="BAC45948">
    <property type="protein sequence ID" value="BAC45948"/>
    <property type="gene ID" value="BAC45948"/>
</dbReference>
<dbReference type="GeneID" id="46487956"/>
<dbReference type="KEGG" id="bja:blr0683"/>
<dbReference type="PATRIC" id="fig|224911.44.peg.53"/>
<dbReference type="eggNOG" id="COG0284">
    <property type="taxonomic scope" value="Bacteria"/>
</dbReference>
<dbReference type="HOGENOM" id="CLU_067069_1_0_5"/>
<dbReference type="InParanoid" id="Q9LCT0"/>
<dbReference type="OrthoDB" id="9806203at2"/>
<dbReference type="PhylomeDB" id="Q9LCT0"/>
<dbReference type="UniPathway" id="UPA00070">
    <property type="reaction ID" value="UER00120"/>
</dbReference>
<dbReference type="Proteomes" id="UP000002526">
    <property type="component" value="Chromosome"/>
</dbReference>
<dbReference type="GO" id="GO:0005829">
    <property type="term" value="C:cytosol"/>
    <property type="evidence" value="ECO:0000318"/>
    <property type="project" value="GO_Central"/>
</dbReference>
<dbReference type="GO" id="GO:0004590">
    <property type="term" value="F:orotidine-5'-phosphate decarboxylase activity"/>
    <property type="evidence" value="ECO:0000318"/>
    <property type="project" value="GO_Central"/>
</dbReference>
<dbReference type="GO" id="GO:0006207">
    <property type="term" value="P:'de novo' pyrimidine nucleobase biosynthetic process"/>
    <property type="evidence" value="ECO:0000318"/>
    <property type="project" value="GO_Central"/>
</dbReference>
<dbReference type="GO" id="GO:0044205">
    <property type="term" value="P:'de novo' UMP biosynthetic process"/>
    <property type="evidence" value="ECO:0007669"/>
    <property type="project" value="UniProtKB-UniRule"/>
</dbReference>
<dbReference type="CDD" id="cd04725">
    <property type="entry name" value="OMP_decarboxylase_like"/>
    <property type="match status" value="1"/>
</dbReference>
<dbReference type="Gene3D" id="3.20.20.70">
    <property type="entry name" value="Aldolase class I"/>
    <property type="match status" value="1"/>
</dbReference>
<dbReference type="HAMAP" id="MF_01200_B">
    <property type="entry name" value="OMPdecase_type1_B"/>
    <property type="match status" value="1"/>
</dbReference>
<dbReference type="InterPro" id="IPR013785">
    <property type="entry name" value="Aldolase_TIM"/>
</dbReference>
<dbReference type="InterPro" id="IPR014732">
    <property type="entry name" value="OMPdecase"/>
</dbReference>
<dbReference type="InterPro" id="IPR018089">
    <property type="entry name" value="OMPdecase_AS"/>
</dbReference>
<dbReference type="InterPro" id="IPR047596">
    <property type="entry name" value="OMPdecase_bac"/>
</dbReference>
<dbReference type="InterPro" id="IPR001754">
    <property type="entry name" value="OMPdeCOase_dom"/>
</dbReference>
<dbReference type="InterPro" id="IPR011060">
    <property type="entry name" value="RibuloseP-bd_barrel"/>
</dbReference>
<dbReference type="NCBIfam" id="NF001273">
    <property type="entry name" value="PRK00230.1"/>
    <property type="match status" value="1"/>
</dbReference>
<dbReference type="NCBIfam" id="TIGR01740">
    <property type="entry name" value="pyrF"/>
    <property type="match status" value="1"/>
</dbReference>
<dbReference type="PANTHER" id="PTHR32119">
    <property type="entry name" value="OROTIDINE 5'-PHOSPHATE DECARBOXYLASE"/>
    <property type="match status" value="1"/>
</dbReference>
<dbReference type="PANTHER" id="PTHR32119:SF2">
    <property type="entry name" value="OROTIDINE 5'-PHOSPHATE DECARBOXYLASE"/>
    <property type="match status" value="1"/>
</dbReference>
<dbReference type="Pfam" id="PF00215">
    <property type="entry name" value="OMPdecase"/>
    <property type="match status" value="1"/>
</dbReference>
<dbReference type="SMART" id="SM00934">
    <property type="entry name" value="OMPdecase"/>
    <property type="match status" value="1"/>
</dbReference>
<dbReference type="SUPFAM" id="SSF51366">
    <property type="entry name" value="Ribulose-phoshate binding barrel"/>
    <property type="match status" value="1"/>
</dbReference>
<dbReference type="PROSITE" id="PS00156">
    <property type="entry name" value="OMPDECASE"/>
    <property type="match status" value="1"/>
</dbReference>
<sequence length="237" mass="24673">MTPAEIAPKDRLIVALDLPSVDAAEAMIARLGDSVTFYKIGYRLAYAGGLPLVARLADKGKKVFLDLKLHDIGNTVAQGVESITRLGATFLTVHAYPQTMKGAVEGRGGSNLKILAVTVLTSYNEDDLHAAGFRLGVAELVEARAQQAQVLGIDGLVSSPEEVGALRKIVGHQMSLVTPGIRPAGSASGDQKRIMTPGRAITAGADYLVVGRPVVEAAEPKAIADAIQAEIGQALGA</sequence>
<protein>
    <recommendedName>
        <fullName evidence="1">Orotidine 5'-phosphate decarboxylase</fullName>
        <ecNumber evidence="1">4.1.1.23</ecNumber>
    </recommendedName>
    <alternativeName>
        <fullName evidence="1">OMP decarboxylase</fullName>
        <shortName evidence="1">OMPDCase</shortName>
        <shortName evidence="1">OMPdecase</shortName>
    </alternativeName>
</protein>
<proteinExistence type="inferred from homology"/>
<feature type="chain" id="PRO_0000134529" description="Orotidine 5'-phosphate decarboxylase">
    <location>
        <begin position="1"/>
        <end position="237"/>
    </location>
</feature>
<feature type="active site" description="Proton donor" evidence="1">
    <location>
        <position position="68"/>
    </location>
</feature>
<feature type="binding site" evidence="1">
    <location>
        <position position="17"/>
    </location>
    <ligand>
        <name>substrate</name>
    </ligand>
</feature>
<feature type="binding site" evidence="1">
    <location>
        <position position="39"/>
    </location>
    <ligand>
        <name>substrate</name>
    </ligand>
</feature>
<feature type="binding site" evidence="1">
    <location>
        <begin position="66"/>
        <end position="75"/>
    </location>
    <ligand>
        <name>substrate</name>
    </ligand>
</feature>
<feature type="binding site" evidence="1">
    <location>
        <position position="121"/>
    </location>
    <ligand>
        <name>substrate</name>
    </ligand>
</feature>
<feature type="binding site" evidence="1">
    <location>
        <position position="182"/>
    </location>
    <ligand>
        <name>substrate</name>
    </ligand>
</feature>
<feature type="binding site" evidence="1">
    <location>
        <position position="191"/>
    </location>
    <ligand>
        <name>substrate</name>
    </ligand>
</feature>
<feature type="binding site" evidence="1">
    <location>
        <position position="211"/>
    </location>
    <ligand>
        <name>substrate</name>
    </ligand>
</feature>
<feature type="binding site" evidence="1">
    <location>
        <position position="212"/>
    </location>
    <ligand>
        <name>substrate</name>
    </ligand>
</feature>
<gene>
    <name evidence="1" type="primary">pyrF</name>
    <name type="ordered locus">blr0683</name>
</gene>
<accession>Q9LCT0</accession>